<evidence type="ECO:0000255" key="1">
    <source>
        <dbReference type="HAMAP-Rule" id="MF_00214"/>
    </source>
</evidence>
<reference key="1">
    <citation type="journal article" date="2010" name="Genome Biol.">
        <title>Structure and dynamics of the pan-genome of Streptococcus pneumoniae and closely related species.</title>
        <authorList>
            <person name="Donati C."/>
            <person name="Hiller N.L."/>
            <person name="Tettelin H."/>
            <person name="Muzzi A."/>
            <person name="Croucher N.J."/>
            <person name="Angiuoli S.V."/>
            <person name="Oggioni M."/>
            <person name="Dunning Hotopp J.C."/>
            <person name="Hu F.Z."/>
            <person name="Riley D.R."/>
            <person name="Covacci A."/>
            <person name="Mitchell T.J."/>
            <person name="Bentley S.D."/>
            <person name="Kilian M."/>
            <person name="Ehrlich G.D."/>
            <person name="Rappuoli R."/>
            <person name="Moxon E.R."/>
            <person name="Masignani V."/>
        </authorList>
    </citation>
    <scope>NUCLEOTIDE SEQUENCE [LARGE SCALE GENOMIC DNA]</scope>
    <source>
        <strain>JJA</strain>
    </source>
</reference>
<dbReference type="EC" id="4.2.1.10" evidence="1"/>
<dbReference type="EMBL" id="CP000919">
    <property type="protein sequence ID" value="ACO18537.1"/>
    <property type="molecule type" value="Genomic_DNA"/>
</dbReference>
<dbReference type="RefSeq" id="WP_000767754.1">
    <property type="nucleotide sequence ID" value="NC_012466.1"/>
</dbReference>
<dbReference type="SMR" id="C1CEW6"/>
<dbReference type="KEGG" id="sjj:SPJ_1277"/>
<dbReference type="HOGENOM" id="CLU_064444_0_0_9"/>
<dbReference type="UniPathway" id="UPA00053">
    <property type="reaction ID" value="UER00086"/>
</dbReference>
<dbReference type="Proteomes" id="UP000002206">
    <property type="component" value="Chromosome"/>
</dbReference>
<dbReference type="GO" id="GO:0003855">
    <property type="term" value="F:3-dehydroquinate dehydratase activity"/>
    <property type="evidence" value="ECO:0007669"/>
    <property type="project" value="UniProtKB-UniRule"/>
</dbReference>
<dbReference type="GO" id="GO:0046279">
    <property type="term" value="P:3,4-dihydroxybenzoate biosynthetic process"/>
    <property type="evidence" value="ECO:0007669"/>
    <property type="project" value="TreeGrafter"/>
</dbReference>
<dbReference type="GO" id="GO:0008652">
    <property type="term" value="P:amino acid biosynthetic process"/>
    <property type="evidence" value="ECO:0007669"/>
    <property type="project" value="UniProtKB-KW"/>
</dbReference>
<dbReference type="GO" id="GO:0009073">
    <property type="term" value="P:aromatic amino acid family biosynthetic process"/>
    <property type="evidence" value="ECO:0007669"/>
    <property type="project" value="UniProtKB-KW"/>
</dbReference>
<dbReference type="GO" id="GO:0009423">
    <property type="term" value="P:chorismate biosynthetic process"/>
    <property type="evidence" value="ECO:0007669"/>
    <property type="project" value="UniProtKB-UniRule"/>
</dbReference>
<dbReference type="CDD" id="cd00502">
    <property type="entry name" value="DHQase_I"/>
    <property type="match status" value="1"/>
</dbReference>
<dbReference type="FunFam" id="3.20.20.70:FF:000217">
    <property type="entry name" value="3-dehydroquinate dehydratase"/>
    <property type="match status" value="1"/>
</dbReference>
<dbReference type="Gene3D" id="3.20.20.70">
    <property type="entry name" value="Aldolase class I"/>
    <property type="match status" value="1"/>
</dbReference>
<dbReference type="HAMAP" id="MF_00214">
    <property type="entry name" value="AroD"/>
    <property type="match status" value="1"/>
</dbReference>
<dbReference type="InterPro" id="IPR013785">
    <property type="entry name" value="Aldolase_TIM"/>
</dbReference>
<dbReference type="InterPro" id="IPR001381">
    <property type="entry name" value="DHquinase_I"/>
</dbReference>
<dbReference type="InterPro" id="IPR050146">
    <property type="entry name" value="Type-I_3-dehydroquinase"/>
</dbReference>
<dbReference type="NCBIfam" id="TIGR01093">
    <property type="entry name" value="aroD"/>
    <property type="match status" value="1"/>
</dbReference>
<dbReference type="PANTHER" id="PTHR43699">
    <property type="entry name" value="3-DEHYDROQUINATE DEHYDRATASE"/>
    <property type="match status" value="1"/>
</dbReference>
<dbReference type="PANTHER" id="PTHR43699:SF1">
    <property type="entry name" value="3-DEHYDROQUINATE DEHYDRATASE"/>
    <property type="match status" value="1"/>
</dbReference>
<dbReference type="Pfam" id="PF01487">
    <property type="entry name" value="DHquinase_I"/>
    <property type="match status" value="1"/>
</dbReference>
<dbReference type="SUPFAM" id="SSF51569">
    <property type="entry name" value="Aldolase"/>
    <property type="match status" value="1"/>
</dbReference>
<keyword id="KW-0028">Amino-acid biosynthesis</keyword>
<keyword id="KW-0057">Aromatic amino acid biosynthesis</keyword>
<keyword id="KW-0456">Lyase</keyword>
<keyword id="KW-0704">Schiff base</keyword>
<accession>C1CEW6</accession>
<proteinExistence type="inferred from homology"/>
<feature type="chain" id="PRO_1000124789" description="3-dehydroquinate dehydratase">
    <location>
        <begin position="1"/>
        <end position="225"/>
    </location>
</feature>
<feature type="active site" description="Proton donor/acceptor" evidence="1">
    <location>
        <position position="118"/>
    </location>
</feature>
<feature type="active site" description="Schiff-base intermediate with substrate" evidence="1">
    <location>
        <position position="143"/>
    </location>
</feature>
<feature type="binding site" evidence="1">
    <location>
        <position position="6"/>
    </location>
    <ligand>
        <name>3-dehydroquinate</name>
        <dbReference type="ChEBI" id="CHEBI:32364"/>
    </ligand>
</feature>
<feature type="binding site" evidence="1">
    <location>
        <begin position="30"/>
        <end position="32"/>
    </location>
    <ligand>
        <name>3-dehydroquinate</name>
        <dbReference type="ChEBI" id="CHEBI:32364"/>
    </ligand>
</feature>
<feature type="binding site" evidence="1">
    <location>
        <position position="62"/>
    </location>
    <ligand>
        <name>3-dehydroquinate</name>
        <dbReference type="ChEBI" id="CHEBI:32364"/>
    </ligand>
</feature>
<feature type="binding site" evidence="1">
    <location>
        <position position="186"/>
    </location>
    <ligand>
        <name>3-dehydroquinate</name>
        <dbReference type="ChEBI" id="CHEBI:32364"/>
    </ligand>
</feature>
<feature type="binding site" evidence="1">
    <location>
        <position position="205"/>
    </location>
    <ligand>
        <name>3-dehydroquinate</name>
        <dbReference type="ChEBI" id="CHEBI:32364"/>
    </ligand>
</feature>
<feature type="binding site" evidence="1">
    <location>
        <position position="209"/>
    </location>
    <ligand>
        <name>3-dehydroquinate</name>
        <dbReference type="ChEBI" id="CHEBI:32364"/>
    </ligand>
</feature>
<organism>
    <name type="scientific">Streptococcus pneumoniae (strain JJA)</name>
    <dbReference type="NCBI Taxonomy" id="488222"/>
    <lineage>
        <taxon>Bacteria</taxon>
        <taxon>Bacillati</taxon>
        <taxon>Bacillota</taxon>
        <taxon>Bacilli</taxon>
        <taxon>Lactobacillales</taxon>
        <taxon>Streptococcaceae</taxon>
        <taxon>Streptococcus</taxon>
    </lineage>
</organism>
<sequence length="225" mass="25753">MKLIVSVMPRSLEEAQALDATRYLDADIIEWRADYLPKEAILQVAPAIFEKFAGRELVFTLRTRSEGGEIDLSPEEYIHLIKEVAQFYQPDYIDFEYYSYKDVFEEMLDFPNLVLSYHNFQETPENMMEILSELTILNPKLVKVAVMAHTEQDVLDLMNYTRGFKTLNPEQEYVTISMGKVGKVSRITADVTGSSWSFASLDEVSAPGQISLASMKKIREILDEA</sequence>
<protein>
    <recommendedName>
        <fullName evidence="1">3-dehydroquinate dehydratase</fullName>
        <shortName evidence="1">3-dehydroquinase</shortName>
        <ecNumber evidence="1">4.2.1.10</ecNumber>
    </recommendedName>
    <alternativeName>
        <fullName evidence="1">Type I DHQase</fullName>
    </alternativeName>
    <alternativeName>
        <fullName evidence="1">Type I dehydroquinase</fullName>
        <shortName evidence="1">DHQ1</shortName>
    </alternativeName>
</protein>
<gene>
    <name evidence="1" type="primary">aroD</name>
    <name type="ordered locus">SPJ_1277</name>
</gene>
<comment type="function">
    <text evidence="1">Involved in the third step of the chorismate pathway, which leads to the biosynthesis of aromatic amino acids. Catalyzes the cis-dehydration of 3-dehydroquinate (DHQ) and introduces the first double bond of the aromatic ring to yield 3-dehydroshikimate.</text>
</comment>
<comment type="catalytic activity">
    <reaction evidence="1">
        <text>3-dehydroquinate = 3-dehydroshikimate + H2O</text>
        <dbReference type="Rhea" id="RHEA:21096"/>
        <dbReference type="ChEBI" id="CHEBI:15377"/>
        <dbReference type="ChEBI" id="CHEBI:16630"/>
        <dbReference type="ChEBI" id="CHEBI:32364"/>
        <dbReference type="EC" id="4.2.1.10"/>
    </reaction>
</comment>
<comment type="pathway">
    <text evidence="1">Metabolic intermediate biosynthesis; chorismate biosynthesis; chorismate from D-erythrose 4-phosphate and phosphoenolpyruvate: step 3/7.</text>
</comment>
<comment type="subunit">
    <text evidence="1">Homodimer.</text>
</comment>
<comment type="similarity">
    <text evidence="1">Belongs to the type-I 3-dehydroquinase family.</text>
</comment>
<name>AROD_STRZJ</name>